<protein>
    <recommendedName>
        <fullName evidence="3">Cingulin</fullName>
    </recommendedName>
</protein>
<reference key="1">
    <citation type="submission" date="2008-03" db="EMBL/GenBank/DDBJ databases">
        <title>NISC comparative sequencing initiative.</title>
        <authorList>
            <person name="Antonellis A."/>
            <person name="Benjamin B."/>
            <person name="Blakesley R.W."/>
            <person name="Bouffard G.G."/>
            <person name="Brinkley C."/>
            <person name="Brooks S."/>
            <person name="Chu G."/>
            <person name="Chub I."/>
            <person name="Coleman H."/>
            <person name="Fuksenko T."/>
            <person name="Gestole M."/>
            <person name="Gregory M."/>
            <person name="Guan X."/>
            <person name="Gupta J."/>
            <person name="Gurson N."/>
            <person name="Han E."/>
            <person name="Han J."/>
            <person name="Hansen N."/>
            <person name="Hargrove A."/>
            <person name="Hines-Harris K."/>
            <person name="Ho S.-L."/>
            <person name="Hu P."/>
            <person name="Hunter G."/>
            <person name="Hurle B."/>
            <person name="Idol J.R."/>
            <person name="Johnson T."/>
            <person name="Knight E."/>
            <person name="Kwong P."/>
            <person name="Lee-Lin S.-Q."/>
            <person name="Legaspi R."/>
            <person name="Madden M."/>
            <person name="Maduro Q.L."/>
            <person name="Maduro V.B."/>
            <person name="Margulies E.H."/>
            <person name="Masiello C."/>
            <person name="Maskeri B."/>
            <person name="McDowell J."/>
            <person name="Merkulov G."/>
            <person name="Montemayor C."/>
            <person name="Mullikin J.C."/>
            <person name="Park M."/>
            <person name="Prasad A."/>
            <person name="Ramsahoye C."/>
            <person name="Reddix-Dugue N."/>
            <person name="Riebow N."/>
            <person name="Schandler K."/>
            <person name="Schueler M.G."/>
            <person name="Sison C."/>
            <person name="Smith L."/>
            <person name="Stantripop S."/>
            <person name="Thomas J.W."/>
            <person name="Thomas P.J."/>
            <person name="Tsipouri V."/>
            <person name="Young A."/>
            <person name="Green E.D."/>
        </authorList>
    </citation>
    <scope>NUCLEOTIDE SEQUENCE [LARGE SCALE GENOMIC DNA]</scope>
</reference>
<gene>
    <name evidence="3" type="primary">CGN</name>
</gene>
<keyword id="KW-0007">Acetylation</keyword>
<keyword id="KW-0965">Cell junction</keyword>
<keyword id="KW-0175">Coiled coil</keyword>
<keyword id="KW-0597">Phosphoprotein</keyword>
<keyword id="KW-0796">Tight junction</keyword>
<name>CING_PLEMO</name>
<dbReference type="EMBL" id="DP000634">
    <property type="protein sequence ID" value="ACA57938.1"/>
    <property type="status" value="ALT_INIT"/>
    <property type="molecule type" value="Genomic_DNA"/>
</dbReference>
<dbReference type="SMR" id="B1MTG4"/>
<dbReference type="GO" id="GO:0005923">
    <property type="term" value="C:bicellular tight junction"/>
    <property type="evidence" value="ECO:0007669"/>
    <property type="project" value="UniProtKB-SubCell"/>
</dbReference>
<dbReference type="GO" id="GO:0016459">
    <property type="term" value="C:myosin complex"/>
    <property type="evidence" value="ECO:0007669"/>
    <property type="project" value="InterPro"/>
</dbReference>
<dbReference type="GO" id="GO:0008017">
    <property type="term" value="F:microtubule binding"/>
    <property type="evidence" value="ECO:0007669"/>
    <property type="project" value="TreeGrafter"/>
</dbReference>
<dbReference type="GO" id="GO:0000226">
    <property type="term" value="P:microtubule cytoskeleton organization"/>
    <property type="evidence" value="ECO:0007669"/>
    <property type="project" value="TreeGrafter"/>
</dbReference>
<dbReference type="InterPro" id="IPR002928">
    <property type="entry name" value="Myosin_tail"/>
</dbReference>
<dbReference type="PANTHER" id="PTHR46349:SF4">
    <property type="entry name" value="CINGULIN"/>
    <property type="match status" value="1"/>
</dbReference>
<dbReference type="PANTHER" id="PTHR46349">
    <property type="entry name" value="CINGULIN-LIKE PROTEIN 1-RELATED"/>
    <property type="match status" value="1"/>
</dbReference>
<dbReference type="Pfam" id="PF01576">
    <property type="entry name" value="Myosin_tail_1"/>
    <property type="match status" value="1"/>
</dbReference>
<proteinExistence type="inferred from homology"/>
<accession>B1MTG4</accession>
<evidence type="ECO:0000250" key="1"/>
<evidence type="ECO:0000250" key="2">
    <source>
        <dbReference type="UniProtKB" id="P59242"/>
    </source>
</evidence>
<evidence type="ECO:0000250" key="3">
    <source>
        <dbReference type="UniProtKB" id="Q9P2M7"/>
    </source>
</evidence>
<evidence type="ECO:0000255" key="4"/>
<evidence type="ECO:0000256" key="5">
    <source>
        <dbReference type="SAM" id="MobiDB-lite"/>
    </source>
</evidence>
<evidence type="ECO:0000305" key="6"/>
<organism>
    <name type="scientific">Plecturocebus moloch</name>
    <name type="common">Dusky titi monkey</name>
    <name type="synonym">Callicebus moloch</name>
    <dbReference type="NCBI Taxonomy" id="9523"/>
    <lineage>
        <taxon>Eukaryota</taxon>
        <taxon>Metazoa</taxon>
        <taxon>Chordata</taxon>
        <taxon>Craniata</taxon>
        <taxon>Vertebrata</taxon>
        <taxon>Euteleostomi</taxon>
        <taxon>Mammalia</taxon>
        <taxon>Eutheria</taxon>
        <taxon>Euarchontoglires</taxon>
        <taxon>Primates</taxon>
        <taxon>Haplorrhini</taxon>
        <taxon>Platyrrhini</taxon>
        <taxon>Pitheciidae</taxon>
        <taxon>Callicebinae</taxon>
        <taxon>Plecturocebus</taxon>
    </lineage>
</organism>
<feature type="chain" id="PRO_0000371430" description="Cingulin">
    <location>
        <begin position="1"/>
        <end position="1204"/>
    </location>
</feature>
<feature type="region of interest" description="Head" evidence="1">
    <location>
        <begin position="7"/>
        <end position="357"/>
    </location>
</feature>
<feature type="region of interest" description="Disordered" evidence="5">
    <location>
        <begin position="25"/>
        <end position="48"/>
    </location>
</feature>
<feature type="region of interest" description="Interaction with TJP1/ZO1" evidence="3">
    <location>
        <begin position="54"/>
        <end position="67"/>
    </location>
</feature>
<feature type="region of interest" description="Disordered" evidence="5">
    <location>
        <begin position="68"/>
        <end position="174"/>
    </location>
</feature>
<feature type="region of interest" description="Disordered" evidence="5">
    <location>
        <begin position="186"/>
        <end position="266"/>
    </location>
</feature>
<feature type="region of interest" description="Disordered" evidence="5">
    <location>
        <begin position="379"/>
        <end position="398"/>
    </location>
</feature>
<feature type="region of interest" description="Disordered" evidence="5">
    <location>
        <begin position="1161"/>
        <end position="1182"/>
    </location>
</feature>
<feature type="region of interest" description="Tail" evidence="1">
    <location>
        <begin position="1162"/>
        <end position="1204"/>
    </location>
</feature>
<feature type="coiled-coil region" evidence="4">
    <location>
        <begin position="358"/>
        <end position="1161"/>
    </location>
</feature>
<feature type="short sequence motif" description="ZIM">
    <location>
        <begin position="48"/>
        <end position="62"/>
    </location>
</feature>
<feature type="compositionally biased region" description="Polar residues" evidence="5">
    <location>
        <begin position="93"/>
        <end position="119"/>
    </location>
</feature>
<feature type="compositionally biased region" description="Basic and acidic residues" evidence="5">
    <location>
        <begin position="207"/>
        <end position="231"/>
    </location>
</feature>
<feature type="compositionally biased region" description="Polar residues" evidence="5">
    <location>
        <begin position="232"/>
        <end position="245"/>
    </location>
</feature>
<feature type="compositionally biased region" description="Low complexity" evidence="5">
    <location>
        <begin position="247"/>
        <end position="261"/>
    </location>
</feature>
<feature type="modified residue" description="Phosphoserine" evidence="2">
    <location>
        <position position="95"/>
    </location>
</feature>
<feature type="modified residue" description="Phosphoserine" evidence="2">
    <location>
        <position position="96"/>
    </location>
</feature>
<feature type="modified residue" description="Phosphoserine" evidence="2">
    <location>
        <position position="98"/>
    </location>
</feature>
<feature type="modified residue" description="Phosphoserine" evidence="3">
    <location>
        <position position="135"/>
    </location>
</feature>
<feature type="modified residue" description="Phosphoserine" evidence="3">
    <location>
        <position position="137"/>
    </location>
</feature>
<feature type="modified residue" description="Phosphoserine" evidence="3">
    <location>
        <position position="140"/>
    </location>
</feature>
<feature type="modified residue" description="Phosphoserine" evidence="3">
    <location>
        <position position="155"/>
    </location>
</feature>
<feature type="modified residue" description="Phosphoserine" evidence="3">
    <location>
        <position position="165"/>
    </location>
</feature>
<feature type="modified residue" description="Phosphoserine" evidence="3">
    <location>
        <position position="214"/>
    </location>
</feature>
<feature type="modified residue" description="Phosphoserine" evidence="3">
    <location>
        <position position="217"/>
    </location>
</feature>
<feature type="modified residue" description="Phosphoserine" evidence="3">
    <location>
        <position position="258"/>
    </location>
</feature>
<feature type="modified residue" description="Phosphoserine" evidence="3">
    <location>
        <position position="276"/>
    </location>
</feature>
<feature type="modified residue" description="Phosphoserine" evidence="2">
    <location>
        <position position="338"/>
    </location>
</feature>
<feature type="modified residue" description="Phosphoserine" evidence="2">
    <location>
        <position position="351"/>
    </location>
</feature>
<feature type="modified residue" description="N6-acetyllysine" evidence="3">
    <location>
        <position position="579"/>
    </location>
</feature>
<feature type="modified residue" description="Phosphoserine" evidence="3">
    <location>
        <position position="1176"/>
    </location>
</feature>
<feature type="modified residue" description="Phosphoserine" evidence="3">
    <location>
        <position position="1177"/>
    </location>
</feature>
<feature type="modified residue" description="Phosphoserine" evidence="3">
    <location>
        <position position="1183"/>
    </location>
</feature>
<sequence length="1204" mass="136244">MEQAPNMAEPRGPVDHGVQIRFITEPVSGAEMGTLRRGGRRPAKDARASTYGVAVRVQGIAGQPFVVLNSGEKGGDSFGVQIKGASDQGASGALSSDSELPENPYSQVQGFPAPSQSSTSDEDPGAQWNGKLLRSQSQASLAGPGPVDPSNRSTSMLDLAPKVASPGSTIDTAPLSSVDSLINKFDGQLGGQARGRTGRRTRMLPPEQRKRSKSLDSRLPRDTLEERERQSTNHWNPSTKYNNHVGSLKQPAQSPSPSPLSGFSRARQTQDWVLQSFEEPRGRAQDPTMLQFKSTPDLLRDQQEAAPPGSVDHMKATIYGILREGSSESEASVRRKVSLVLEKMQPLGVISSGSSKAMAGQGELARKVEELQRKLDDEVKKRQKLEPSRAGLERQLEEKTEECSQLQELLERREGEAQQSSKELQNMKRLLDQGESLQHGLETQVMELQSKLKQVQGPEPAKELLLKDLLETRELLEEVLEGKQRVEEQLRLRERELTALKGALKEEVASRDQEVEHVRQQCQRDTEQLRKSMQDASQDHAVLEAERQKMSALVRGLQRELEETSEETGHWQSMFQKNKEELRATKQELLQLRMEKEEMEEELGEKIEALQRELEQARASAGDARQVEVLKKELRRAQEELEELQAERQSQEVAGRHRDRELEKQLAGLRVEADRGRELEEQNFQLQKTLQQLRHDCEEASKARGMAAEAEATVLGQRRGAVEAALRETQGDNDELRRRVLGLEQQLRETRGLVDGGEAAEARLRDKLQRLEADKQRLEEALNASQEEEGSLAAAKRALEARLEEAQRGLARLGQEQQTLTRALEEEGKQREALRRSKAELEEQKRLLDRTVDRLNEELEQIGEASKQALQQLQAQLEEYKEKARREVADAQRQAKDWASEAEKSSGGLNRLQDEIQRLRQALQACQAERDTAQLDKELLAQRLQGLEQEAENKKRSQDDRARQLKGLEEKVSRLEAELDEEKNTVELLTDRVNRGRDQVDQLRTELMQERSARQDLECDKISLERQNKDLKTRLASSEGFQKPSASLSQLESQNQLLQERLQAEEREKTVLQSTNRKLERKVKELSIQIEDERQHVNDQKDQLSLRVKAFFRQVDEAEEEIERLDSLRRKAQRELEEQHEVNGQLQARVKSLEKDSWRKASRSAAESALKHEGLSSDEEFDSVYDPSSIASLLTESNLQTSSC</sequence>
<comment type="function">
    <text evidence="1">Probably plays a role in the formation and regulation of the tight junction (TJ) paracellular permeability barrier.</text>
</comment>
<comment type="subunit">
    <text evidence="3">Homodimer (By similarity). Interacts with TJP1/ZO1 and SPEF1 (By similarity).</text>
</comment>
<comment type="subcellular location">
    <subcellularLocation>
        <location evidence="2">Cell junction</location>
        <location evidence="2">Tight junction</location>
    </subcellularLocation>
    <text evidence="2 3">Localizes to the apical junction complex composed of tight and adherens junctions. Colocalizes with SPEF1 at sites of cell-cell contact in intestinal epithelial cells.</text>
</comment>
<comment type="domain">
    <text evidence="1">Deletion of the TJP1/ZO1 interaction motif (ZIM) decreases but does not abolish colocalization with TJP1/ZO1.</text>
</comment>
<comment type="similarity">
    <text evidence="6">Belongs to the cingulin family.</text>
</comment>
<comment type="caution">
    <text evidence="6">It is uncertain whether Met-1 or Met-7 is the initiator.</text>
</comment>
<comment type="sequence caution" evidence="6">
    <conflict type="erroneous initiation">
        <sequence resource="EMBL-CDS" id="ACA57938"/>
    </conflict>
    <text>Truncated N-terminus.</text>
</comment>